<feature type="chain" id="PRO_0000305119" description="Delta-stichotoxin-Hcr3a" evidence="2">
    <location>
        <begin position="1"/>
        <end position="47"/>
    </location>
</feature>
<feature type="modified residue" description="Hydroxyproline" evidence="2">
    <location>
        <position position="3"/>
    </location>
</feature>
<feature type="disulfide bond" evidence="1">
    <location>
        <begin position="4"/>
        <end position="44"/>
    </location>
</feature>
<feature type="disulfide bond" evidence="1">
    <location>
        <begin position="6"/>
        <end position="34"/>
    </location>
</feature>
<feature type="disulfide bond" evidence="1">
    <location>
        <begin position="27"/>
        <end position="45"/>
    </location>
</feature>
<evidence type="ECO:0000250" key="1">
    <source>
        <dbReference type="UniProtKB" id="P0C280"/>
    </source>
</evidence>
<evidence type="ECO:0000269" key="2">
    <source ref="1"/>
</evidence>
<evidence type="ECO:0000303" key="3">
    <source>
    </source>
</evidence>
<evidence type="ECO:0000303" key="4">
    <source ref="1"/>
</evidence>
<evidence type="ECO:0000305" key="5"/>
<name>NA11_RADCR</name>
<comment type="function">
    <text evidence="1">Inhibits voltage-gated sodium channels (Nav).</text>
</comment>
<comment type="subcellular location">
    <subcellularLocation>
        <location>Secreted</location>
    </subcellularLocation>
    <subcellularLocation>
        <location evidence="5">Nematocyst</location>
    </subcellularLocation>
</comment>
<comment type="miscellaneous">
    <text evidence="5">A synonymy between H.magnifica and R.crispa is controversial.</text>
</comment>
<comment type="similarity">
    <text evidence="5">Belongs to the sea anemone sodium channel inhibitory toxin family. Type I subfamily.</text>
</comment>
<accession>P0C5G5</accession>
<reference key="1">
    <citation type="journal article" date="1996" name="Fish. Sci.">
        <title>Isolation and amino acid sequence of a polypeptide toxin from the sea anemone Radianthus crispus.</title>
        <authorList>
            <person name="Shiomi K."/>
            <person name="Lin X.Y."/>
            <person name="Nagashima Y."/>
            <person name="Ishida M."/>
        </authorList>
    </citation>
    <scope>PROTEIN SEQUENCE</scope>
    <scope>HYDROXYLATION AT PRO-3</scope>
</reference>
<reference key="2">
    <citation type="journal article" date="2006" name="Mar. Biotechnol.">
        <title>Peptide toxins in sea anemones: structural and functional aspects.</title>
        <authorList>
            <person name="Honma T."/>
            <person name="Shiomi K."/>
        </authorList>
    </citation>
    <scope>REVIEW</scope>
</reference>
<reference key="3">
    <citation type="journal article" date="2012" name="Toxicon">
        <title>Development of a rational nomenclature for naming peptide and protein toxins from sea anemones.</title>
        <authorList>
            <person name="Oliveira J.S."/>
            <person name="Fuentes-Silva D."/>
            <person name="King G.F."/>
        </authorList>
    </citation>
    <scope>NOMENCLATURE</scope>
</reference>
<dbReference type="SMR" id="P0C5G5"/>
<dbReference type="GO" id="GO:0005576">
    <property type="term" value="C:extracellular region"/>
    <property type="evidence" value="ECO:0007669"/>
    <property type="project" value="UniProtKB-SubCell"/>
</dbReference>
<dbReference type="GO" id="GO:0042151">
    <property type="term" value="C:nematocyst"/>
    <property type="evidence" value="ECO:0007669"/>
    <property type="project" value="UniProtKB-SubCell"/>
</dbReference>
<dbReference type="GO" id="GO:0017080">
    <property type="term" value="F:sodium channel regulator activity"/>
    <property type="evidence" value="ECO:0007669"/>
    <property type="project" value="UniProtKB-KW"/>
</dbReference>
<dbReference type="GO" id="GO:0090729">
    <property type="term" value="F:toxin activity"/>
    <property type="evidence" value="ECO:0007669"/>
    <property type="project" value="UniProtKB-KW"/>
</dbReference>
<dbReference type="Gene3D" id="2.20.20.10">
    <property type="entry name" value="Anthopleurin-A"/>
    <property type="match status" value="1"/>
</dbReference>
<dbReference type="InterPro" id="IPR023355">
    <property type="entry name" value="Myo_ane_neurotoxin_sf"/>
</dbReference>
<dbReference type="Pfam" id="PF00706">
    <property type="entry name" value="Toxin_4"/>
    <property type="match status" value="1"/>
</dbReference>
<dbReference type="SUPFAM" id="SSF57392">
    <property type="entry name" value="Defensin-like"/>
    <property type="match status" value="1"/>
</dbReference>
<proteinExistence type="evidence at protein level"/>
<protein>
    <recommendedName>
        <fullName evidence="3">Delta-stichotoxin-Hcr3a</fullName>
        <shortName evidence="3">Delta-SHTX-Hcr3a</shortName>
    </recommendedName>
    <alternativeName>
        <fullName>Rc-I</fullName>
        <shortName evidence="4">Rc I</shortName>
        <shortName>Rc-1</shortName>
    </alternativeName>
</protein>
<keyword id="KW-0903">Direct protein sequencing</keyword>
<keyword id="KW-1015">Disulfide bond</keyword>
<keyword id="KW-0379">Hydroxylation</keyword>
<keyword id="KW-0872">Ion channel impairing toxin</keyword>
<keyword id="KW-0166">Nematocyst</keyword>
<keyword id="KW-0528">Neurotoxin</keyword>
<keyword id="KW-0964">Secreted</keyword>
<keyword id="KW-0800">Toxin</keyword>
<keyword id="KW-0738">Voltage-gated sodium channel impairing toxin</keyword>
<organism>
    <name type="scientific">Radianthus crispa</name>
    <name type="common">Leathery sea anemone</name>
    <name type="synonym">Heteractis crispa</name>
    <dbReference type="NCBI Taxonomy" id="3122430"/>
    <lineage>
        <taxon>Eukaryota</taxon>
        <taxon>Metazoa</taxon>
        <taxon>Cnidaria</taxon>
        <taxon>Anthozoa</taxon>
        <taxon>Hexacorallia</taxon>
        <taxon>Actiniaria</taxon>
        <taxon>Stichodactylidae</taxon>
        <taxon>Radianthus</taxon>
    </lineage>
</organism>
<sequence>GVPCRCDSDGPSVHGNTLSGTIWVGSCETGWHKCNTEHNLFHECCKQ</sequence>